<keyword id="KW-0010">Activator</keyword>
<keyword id="KW-0025">Alternative splicing</keyword>
<keyword id="KW-0963">Cytoplasm</keyword>
<keyword id="KW-0238">DNA-binding</keyword>
<keyword id="KW-0539">Nucleus</keyword>
<keyword id="KW-1185">Reference proteome</keyword>
<keyword id="KW-0678">Repressor</keyword>
<keyword id="KW-0804">Transcription</keyword>
<keyword id="KW-0805">Transcription regulation</keyword>
<gene>
    <name type="primary">Foxr1</name>
    <name type="synonym">Foxn5</name>
    <name type="synonym">Gm1115</name>
</gene>
<dbReference type="EMBL" id="AK139562">
    <property type="protein sequence ID" value="BAE24063.1"/>
    <property type="molecule type" value="mRNA"/>
</dbReference>
<dbReference type="EMBL" id="AC122428">
    <property type="status" value="NOT_ANNOTATED_CDS"/>
    <property type="molecule type" value="Genomic_DNA"/>
</dbReference>
<dbReference type="CCDS" id="CCDS23111.1">
    <molecule id="Q3UTB7-2"/>
</dbReference>
<dbReference type="RefSeq" id="NP_001028641.1">
    <molecule id="Q3UTB7-2"/>
    <property type="nucleotide sequence ID" value="NM_001033469.3"/>
</dbReference>
<dbReference type="SMR" id="Q3UTB7"/>
<dbReference type="FunCoup" id="Q3UTB7">
    <property type="interactions" value="1173"/>
</dbReference>
<dbReference type="STRING" id="10090.ENSMUSP00000096436"/>
<dbReference type="iPTMnet" id="Q3UTB7"/>
<dbReference type="PhosphoSitePlus" id="Q3UTB7"/>
<dbReference type="PaxDb" id="10090-ENSMUSP00000096436"/>
<dbReference type="Antibodypedia" id="32552">
    <property type="antibodies" value="96 antibodies from 25 providers"/>
</dbReference>
<dbReference type="DNASU" id="382074"/>
<dbReference type="Ensembl" id="ENSMUST00000098837.3">
    <molecule id="Q3UTB7-2"/>
    <property type="protein sequence ID" value="ENSMUSP00000096436.2"/>
    <property type="gene ID" value="ENSMUSG00000074397.6"/>
</dbReference>
<dbReference type="GeneID" id="382074"/>
<dbReference type="KEGG" id="mmu:382074"/>
<dbReference type="UCSC" id="uc009pdr.1">
    <molecule id="Q3UTB7-2"/>
    <property type="organism name" value="mouse"/>
</dbReference>
<dbReference type="AGR" id="MGI:2685961"/>
<dbReference type="CTD" id="283150"/>
<dbReference type="MGI" id="MGI:2685961">
    <property type="gene designation" value="Foxr1"/>
</dbReference>
<dbReference type="VEuPathDB" id="HostDB:ENSMUSG00000074397"/>
<dbReference type="eggNOG" id="KOG2294">
    <property type="taxonomic scope" value="Eukaryota"/>
</dbReference>
<dbReference type="GeneTree" id="ENSGT00940000162579"/>
<dbReference type="HOGENOM" id="CLU_108077_0_0_1"/>
<dbReference type="InParanoid" id="Q3UTB7"/>
<dbReference type="OMA" id="IQRCMSQ"/>
<dbReference type="OrthoDB" id="65894at9989"/>
<dbReference type="PhylomeDB" id="Q3UTB7"/>
<dbReference type="BioGRID-ORCS" id="382074">
    <property type="hits" value="2 hits in 76 CRISPR screens"/>
</dbReference>
<dbReference type="PRO" id="PR:Q3UTB7"/>
<dbReference type="Proteomes" id="UP000000589">
    <property type="component" value="Chromosome 9"/>
</dbReference>
<dbReference type="RNAct" id="Q3UTB7">
    <property type="molecule type" value="protein"/>
</dbReference>
<dbReference type="Bgee" id="ENSMUSG00000074397">
    <property type="expression patterns" value="Expressed in primary oocyte and 14 other cell types or tissues"/>
</dbReference>
<dbReference type="ExpressionAtlas" id="Q3UTB7">
    <property type="expression patterns" value="baseline and differential"/>
</dbReference>
<dbReference type="GO" id="GO:0005737">
    <property type="term" value="C:cytoplasm"/>
    <property type="evidence" value="ECO:0000250"/>
    <property type="project" value="UniProtKB"/>
</dbReference>
<dbReference type="GO" id="GO:0005634">
    <property type="term" value="C:nucleus"/>
    <property type="evidence" value="ECO:0000250"/>
    <property type="project" value="UniProtKB"/>
</dbReference>
<dbReference type="GO" id="GO:0048471">
    <property type="term" value="C:perinuclear region of cytoplasm"/>
    <property type="evidence" value="ECO:0007669"/>
    <property type="project" value="UniProtKB-SubCell"/>
</dbReference>
<dbReference type="GO" id="GO:0001228">
    <property type="term" value="F:DNA-binding transcription activator activity, RNA polymerase II-specific"/>
    <property type="evidence" value="ECO:0000250"/>
    <property type="project" value="UniProtKB"/>
</dbReference>
<dbReference type="GO" id="GO:0001227">
    <property type="term" value="F:DNA-binding transcription repressor activity, RNA polymerase II-specific"/>
    <property type="evidence" value="ECO:0000250"/>
    <property type="project" value="UniProtKB"/>
</dbReference>
<dbReference type="GO" id="GO:0043565">
    <property type="term" value="F:sequence-specific DNA binding"/>
    <property type="evidence" value="ECO:0007669"/>
    <property type="project" value="InterPro"/>
</dbReference>
<dbReference type="GO" id="GO:0007420">
    <property type="term" value="P:brain development"/>
    <property type="evidence" value="ECO:0000315"/>
    <property type="project" value="UniProtKB"/>
</dbReference>
<dbReference type="GO" id="GO:0045944">
    <property type="term" value="P:positive regulation of transcription by RNA polymerase II"/>
    <property type="evidence" value="ECO:0000250"/>
    <property type="project" value="UniProtKB"/>
</dbReference>
<dbReference type="GO" id="GO:0006357">
    <property type="term" value="P:regulation of transcription by RNA polymerase II"/>
    <property type="evidence" value="ECO:0000250"/>
    <property type="project" value="UniProtKB"/>
</dbReference>
<dbReference type="CDD" id="cd20036">
    <property type="entry name" value="FH_FOXR"/>
    <property type="match status" value="1"/>
</dbReference>
<dbReference type="Gene3D" id="1.10.10.10">
    <property type="entry name" value="Winged helix-like DNA-binding domain superfamily/Winged helix DNA-binding domain"/>
    <property type="match status" value="1"/>
</dbReference>
<dbReference type="InterPro" id="IPR001766">
    <property type="entry name" value="Fork_head_dom"/>
</dbReference>
<dbReference type="InterPro" id="IPR052328">
    <property type="entry name" value="FOX_transcription_regulators"/>
</dbReference>
<dbReference type="InterPro" id="IPR036388">
    <property type="entry name" value="WH-like_DNA-bd_sf"/>
</dbReference>
<dbReference type="InterPro" id="IPR036390">
    <property type="entry name" value="WH_DNA-bd_sf"/>
</dbReference>
<dbReference type="PANTHER" id="PTHR46789">
    <property type="entry name" value="FORKHEAD BOX PROTEIN R1"/>
    <property type="match status" value="1"/>
</dbReference>
<dbReference type="PANTHER" id="PTHR46789:SF1">
    <property type="entry name" value="FORKHEAD BOX PROTEIN R1"/>
    <property type="match status" value="1"/>
</dbReference>
<dbReference type="Pfam" id="PF00250">
    <property type="entry name" value="Forkhead"/>
    <property type="match status" value="1"/>
</dbReference>
<dbReference type="PRINTS" id="PR00053">
    <property type="entry name" value="FORKHEAD"/>
</dbReference>
<dbReference type="SMART" id="SM00339">
    <property type="entry name" value="FH"/>
    <property type="match status" value="1"/>
</dbReference>
<dbReference type="SUPFAM" id="SSF46785">
    <property type="entry name" value="Winged helix' DNA-binding domain"/>
    <property type="match status" value="1"/>
</dbReference>
<dbReference type="PROSITE" id="PS50039">
    <property type="entry name" value="FORK_HEAD_3"/>
    <property type="match status" value="1"/>
</dbReference>
<comment type="function">
    <text evidence="1 5">Transcription factor which acts as both an activator and a repressor (By similarity). Activates transcription of a number of genes including the heat shock chaperones HSPA1A and HSPA6 and the antioxidant NADPH-dependent reductase DHRS2 which are involved in protection against oxidative stress (By similarity). Required for normal brain development (PubMed:34723967).</text>
</comment>
<comment type="subcellular location">
    <subcellularLocation>
        <location evidence="1">Nucleus</location>
    </subcellularLocation>
    <subcellularLocation>
        <location evidence="4">Cytoplasm</location>
    </subcellularLocation>
    <subcellularLocation>
        <location evidence="4">Cytoplasm</location>
        <location evidence="4">Perinuclear region</location>
    </subcellularLocation>
    <text evidence="4 5">Localizes to the nucleus and cytoplasm with higher levels in the nucleus where it is expressed in a diffuse manner (PubMed:34723967). Located in the cytoplasm of spermatocytes and strongly accumulates at the perinuclear region in elongated spermatids (PubMed:25609838).</text>
</comment>
<comment type="alternative products">
    <event type="alternative splicing"/>
    <isoform>
        <id>Q3UTB7-1</id>
        <name>1</name>
        <sequence type="displayed"/>
    </isoform>
    <isoform>
        <id>Q3UTB7-2</id>
        <name>2</name>
        <sequence type="described" ref="VSP_021113 VSP_021114"/>
    </isoform>
</comment>
<comment type="tissue specificity">
    <text evidence="4 5">Expressed in adult germ cells (at protein level) (PubMed:25609838). Expressed in heart, liver, lung and embryonic brain (PubMed:34723967).</text>
</comment>
<comment type="developmental stage">
    <text evidence="4">Weakly expressed in embryonic gonads.</text>
</comment>
<comment type="disruption phenotype">
    <text evidence="5">Reduced survival with the majority of mutants dying during embryonic development and only 23.5% of mutants living to postnatal day 21 (PubMed:34723967). Surviving newborns are smaller and lighter than their wild-type littermates (PubMed:34723967). Newborn brains display decreased cortical thickness and enlarged ventricles (PubMed:34723967).</text>
</comment>
<accession>Q3UTB7</accession>
<organism>
    <name type="scientific">Mus musculus</name>
    <name type="common">Mouse</name>
    <dbReference type="NCBI Taxonomy" id="10090"/>
    <lineage>
        <taxon>Eukaryota</taxon>
        <taxon>Metazoa</taxon>
        <taxon>Chordata</taxon>
        <taxon>Craniata</taxon>
        <taxon>Vertebrata</taxon>
        <taxon>Euteleostomi</taxon>
        <taxon>Mammalia</taxon>
        <taxon>Eutheria</taxon>
        <taxon>Euarchontoglires</taxon>
        <taxon>Glires</taxon>
        <taxon>Rodentia</taxon>
        <taxon>Myomorpha</taxon>
        <taxon>Muroidea</taxon>
        <taxon>Muridae</taxon>
        <taxon>Murinae</taxon>
        <taxon>Mus</taxon>
        <taxon>Mus</taxon>
    </lineage>
</organism>
<evidence type="ECO:0000250" key="1">
    <source>
        <dbReference type="UniProtKB" id="Q6PIV2"/>
    </source>
</evidence>
<evidence type="ECO:0000255" key="2">
    <source>
        <dbReference type="PROSITE-ProRule" id="PRU00089"/>
    </source>
</evidence>
<evidence type="ECO:0000256" key="3">
    <source>
        <dbReference type="SAM" id="MobiDB-lite"/>
    </source>
</evidence>
<evidence type="ECO:0000269" key="4">
    <source>
    </source>
</evidence>
<evidence type="ECO:0000269" key="5">
    <source>
    </source>
</evidence>
<evidence type="ECO:0000303" key="6">
    <source>
    </source>
</evidence>
<name>FOXR1_MOUSE</name>
<protein>
    <recommendedName>
        <fullName>Forkhead box protein R1</fullName>
    </recommendedName>
    <alternativeName>
        <fullName>Forkhead box protein N5</fullName>
    </alternativeName>
</protein>
<proteinExistence type="evidence at protein level"/>
<feature type="chain" id="PRO_0000253779" description="Forkhead box protein R1">
    <location>
        <begin position="1"/>
        <end position="268"/>
    </location>
</feature>
<feature type="DNA-binding region" description="Fork-head" evidence="2">
    <location>
        <begin position="149"/>
        <end position="248"/>
    </location>
</feature>
<feature type="region of interest" description="Disordered" evidence="3">
    <location>
        <begin position="91"/>
        <end position="126"/>
    </location>
</feature>
<feature type="splice variant" id="VSP_021113" description="In isoform 2." evidence="6">
    <original>EHFPFFRTAPEAWKNTVRHNLSFRDSFEKVPASRQGGASTGPR</original>
    <variation>QNICLLSAQEHNHSYPFATYNPAVPQIPILLGRYSFSYPVPKD</variation>
    <location>
        <begin position="181"/>
        <end position="223"/>
    </location>
</feature>
<feature type="splice variant" id="VSP_021114" description="In isoform 2." evidence="6">
    <location>
        <begin position="224"/>
        <end position="268"/>
    </location>
</feature>
<reference key="1">
    <citation type="journal article" date="2005" name="Science">
        <title>The transcriptional landscape of the mammalian genome.</title>
        <authorList>
            <person name="Carninci P."/>
            <person name="Kasukawa T."/>
            <person name="Katayama S."/>
            <person name="Gough J."/>
            <person name="Frith M.C."/>
            <person name="Maeda N."/>
            <person name="Oyama R."/>
            <person name="Ravasi T."/>
            <person name="Lenhard B."/>
            <person name="Wells C."/>
            <person name="Kodzius R."/>
            <person name="Shimokawa K."/>
            <person name="Bajic V.B."/>
            <person name="Brenner S.E."/>
            <person name="Batalov S."/>
            <person name="Forrest A.R."/>
            <person name="Zavolan M."/>
            <person name="Davis M.J."/>
            <person name="Wilming L.G."/>
            <person name="Aidinis V."/>
            <person name="Allen J.E."/>
            <person name="Ambesi-Impiombato A."/>
            <person name="Apweiler R."/>
            <person name="Aturaliya R.N."/>
            <person name="Bailey T.L."/>
            <person name="Bansal M."/>
            <person name="Baxter L."/>
            <person name="Beisel K.W."/>
            <person name="Bersano T."/>
            <person name="Bono H."/>
            <person name="Chalk A.M."/>
            <person name="Chiu K.P."/>
            <person name="Choudhary V."/>
            <person name="Christoffels A."/>
            <person name="Clutterbuck D.R."/>
            <person name="Crowe M.L."/>
            <person name="Dalla E."/>
            <person name="Dalrymple B.P."/>
            <person name="de Bono B."/>
            <person name="Della Gatta G."/>
            <person name="di Bernardo D."/>
            <person name="Down T."/>
            <person name="Engstrom P."/>
            <person name="Fagiolini M."/>
            <person name="Faulkner G."/>
            <person name="Fletcher C.F."/>
            <person name="Fukushima T."/>
            <person name="Furuno M."/>
            <person name="Futaki S."/>
            <person name="Gariboldi M."/>
            <person name="Georgii-Hemming P."/>
            <person name="Gingeras T.R."/>
            <person name="Gojobori T."/>
            <person name="Green R.E."/>
            <person name="Gustincich S."/>
            <person name="Harbers M."/>
            <person name="Hayashi Y."/>
            <person name="Hensch T.K."/>
            <person name="Hirokawa N."/>
            <person name="Hill D."/>
            <person name="Huminiecki L."/>
            <person name="Iacono M."/>
            <person name="Ikeo K."/>
            <person name="Iwama A."/>
            <person name="Ishikawa T."/>
            <person name="Jakt M."/>
            <person name="Kanapin A."/>
            <person name="Katoh M."/>
            <person name="Kawasawa Y."/>
            <person name="Kelso J."/>
            <person name="Kitamura H."/>
            <person name="Kitano H."/>
            <person name="Kollias G."/>
            <person name="Krishnan S.P."/>
            <person name="Kruger A."/>
            <person name="Kummerfeld S.K."/>
            <person name="Kurochkin I.V."/>
            <person name="Lareau L.F."/>
            <person name="Lazarevic D."/>
            <person name="Lipovich L."/>
            <person name="Liu J."/>
            <person name="Liuni S."/>
            <person name="McWilliam S."/>
            <person name="Madan Babu M."/>
            <person name="Madera M."/>
            <person name="Marchionni L."/>
            <person name="Matsuda H."/>
            <person name="Matsuzawa S."/>
            <person name="Miki H."/>
            <person name="Mignone F."/>
            <person name="Miyake S."/>
            <person name="Morris K."/>
            <person name="Mottagui-Tabar S."/>
            <person name="Mulder N."/>
            <person name="Nakano N."/>
            <person name="Nakauchi H."/>
            <person name="Ng P."/>
            <person name="Nilsson R."/>
            <person name="Nishiguchi S."/>
            <person name="Nishikawa S."/>
            <person name="Nori F."/>
            <person name="Ohara O."/>
            <person name="Okazaki Y."/>
            <person name="Orlando V."/>
            <person name="Pang K.C."/>
            <person name="Pavan W.J."/>
            <person name="Pavesi G."/>
            <person name="Pesole G."/>
            <person name="Petrovsky N."/>
            <person name="Piazza S."/>
            <person name="Reed J."/>
            <person name="Reid J.F."/>
            <person name="Ring B.Z."/>
            <person name="Ringwald M."/>
            <person name="Rost B."/>
            <person name="Ruan Y."/>
            <person name="Salzberg S.L."/>
            <person name="Sandelin A."/>
            <person name="Schneider C."/>
            <person name="Schoenbach C."/>
            <person name="Sekiguchi K."/>
            <person name="Semple C.A."/>
            <person name="Seno S."/>
            <person name="Sessa L."/>
            <person name="Sheng Y."/>
            <person name="Shibata Y."/>
            <person name="Shimada H."/>
            <person name="Shimada K."/>
            <person name="Silva D."/>
            <person name="Sinclair B."/>
            <person name="Sperling S."/>
            <person name="Stupka E."/>
            <person name="Sugiura K."/>
            <person name="Sultana R."/>
            <person name="Takenaka Y."/>
            <person name="Taki K."/>
            <person name="Tammoja K."/>
            <person name="Tan S.L."/>
            <person name="Tang S."/>
            <person name="Taylor M.S."/>
            <person name="Tegner J."/>
            <person name="Teichmann S.A."/>
            <person name="Ueda H.R."/>
            <person name="van Nimwegen E."/>
            <person name="Verardo R."/>
            <person name="Wei C.L."/>
            <person name="Yagi K."/>
            <person name="Yamanishi H."/>
            <person name="Zabarovsky E."/>
            <person name="Zhu S."/>
            <person name="Zimmer A."/>
            <person name="Hide W."/>
            <person name="Bult C."/>
            <person name="Grimmond S.M."/>
            <person name="Teasdale R.D."/>
            <person name="Liu E.T."/>
            <person name="Brusic V."/>
            <person name="Quackenbush J."/>
            <person name="Wahlestedt C."/>
            <person name="Mattick J.S."/>
            <person name="Hume D.A."/>
            <person name="Kai C."/>
            <person name="Sasaki D."/>
            <person name="Tomaru Y."/>
            <person name="Fukuda S."/>
            <person name="Kanamori-Katayama M."/>
            <person name="Suzuki M."/>
            <person name="Aoki J."/>
            <person name="Arakawa T."/>
            <person name="Iida J."/>
            <person name="Imamura K."/>
            <person name="Itoh M."/>
            <person name="Kato T."/>
            <person name="Kawaji H."/>
            <person name="Kawagashira N."/>
            <person name="Kawashima T."/>
            <person name="Kojima M."/>
            <person name="Kondo S."/>
            <person name="Konno H."/>
            <person name="Nakano K."/>
            <person name="Ninomiya N."/>
            <person name="Nishio T."/>
            <person name="Okada M."/>
            <person name="Plessy C."/>
            <person name="Shibata K."/>
            <person name="Shiraki T."/>
            <person name="Suzuki S."/>
            <person name="Tagami M."/>
            <person name="Waki K."/>
            <person name="Watahiki A."/>
            <person name="Okamura-Oho Y."/>
            <person name="Suzuki H."/>
            <person name="Kawai J."/>
            <person name="Hayashizaki Y."/>
        </authorList>
    </citation>
    <scope>NUCLEOTIDE SEQUENCE [LARGE SCALE MRNA] (ISOFORM 2)</scope>
    <source>
        <strain>C57BL/6J</strain>
        <tissue>Egg</tissue>
    </source>
</reference>
<reference key="2">
    <citation type="journal article" date="2009" name="PLoS Biol.">
        <title>Lineage-specific biology revealed by a finished genome assembly of the mouse.</title>
        <authorList>
            <person name="Church D.M."/>
            <person name="Goodstadt L."/>
            <person name="Hillier L.W."/>
            <person name="Zody M.C."/>
            <person name="Goldstein S."/>
            <person name="She X."/>
            <person name="Bult C.J."/>
            <person name="Agarwala R."/>
            <person name="Cherry J.L."/>
            <person name="DiCuccio M."/>
            <person name="Hlavina W."/>
            <person name="Kapustin Y."/>
            <person name="Meric P."/>
            <person name="Maglott D."/>
            <person name="Birtle Z."/>
            <person name="Marques A.C."/>
            <person name="Graves T."/>
            <person name="Zhou S."/>
            <person name="Teague B."/>
            <person name="Potamousis K."/>
            <person name="Churas C."/>
            <person name="Place M."/>
            <person name="Herschleb J."/>
            <person name="Runnheim R."/>
            <person name="Forrest D."/>
            <person name="Amos-Landgraf J."/>
            <person name="Schwartz D.C."/>
            <person name="Cheng Z."/>
            <person name="Lindblad-Toh K."/>
            <person name="Eichler E.E."/>
            <person name="Ponting C.P."/>
        </authorList>
    </citation>
    <scope>NUCLEOTIDE SEQUENCE [LARGE SCALE GENOMIC DNA]</scope>
    <source>
        <strain>C57BL/6J</strain>
    </source>
</reference>
<reference key="3">
    <citation type="journal article" date="2015" name="Biol. Reprod.">
        <title>Combining RNA and protein profiling data with network interactions identifies genes associated with spermatogenesis in mouse and human.</title>
        <authorList>
            <person name="Petit F.G."/>
            <person name="Kervarrec C."/>
            <person name="Jamin S.P."/>
            <person name="Smagulova F."/>
            <person name="Hao C."/>
            <person name="Becker E."/>
            <person name="Jegou B."/>
            <person name="Chalmel F."/>
            <person name="Primig M."/>
        </authorList>
    </citation>
    <scope>TISSUE SPECIFICITY</scope>
    <scope>DEVELOPMENTAL STAGE</scope>
    <scope>SUBCELLULAR LOCATION</scope>
</reference>
<reference key="4">
    <citation type="journal article" date="2021" name="PLoS Genet.">
        <title>FOXR1 regulates stress response pathways and is necessary for proper brain development.</title>
        <authorList>
            <person name="Mota A."/>
            <person name="Waxman H.K."/>
            <person name="Hong R."/>
            <person name="Lagani G.D."/>
            <person name="Niu S.Y."/>
            <person name="Bertherat F.L."/>
            <person name="Wolfe L."/>
            <person name="Malicdan C.M."/>
            <person name="Markello T.C."/>
            <person name="Adams D.R."/>
            <person name="Gahl W.A."/>
            <person name="Cheng C.S."/>
            <person name="Beffert U."/>
            <person name="Ho A."/>
        </authorList>
    </citation>
    <scope>FUNCTION</scope>
    <scope>TISSUE SPECIFICITY</scope>
    <scope>DISRUPTION PHENOTYPE</scope>
</reference>
<sequence length="268" mass="30579">MGNECFLTFTTTHLSEAEQKLALYRLQLVEPPKLPLEKKTNPDKDGPDIKPNLWMWVNPNMVYPPGKLEVAVKEEDQSALSAFQPALKEEEDSCSEASEVQQPLPPCRQKRKQRRSTVPLPLAPGRRAPLENPWRLPQAISPEGRLWSRPPLHYFHLIALALRNSPPCGLSVQQIYSFTREHFPFFRTAPEAWKNTVRHNLSFRDSFEKVPASRQGGASTGPRSCLWKLTEEGHRRFSKEARTLASTQLQSIQQCMSQPGVKPFLFDL</sequence>